<name>YACG_ECOLI</name>
<organism>
    <name type="scientific">Escherichia coli (strain K12)</name>
    <dbReference type="NCBI Taxonomy" id="83333"/>
    <lineage>
        <taxon>Bacteria</taxon>
        <taxon>Pseudomonadati</taxon>
        <taxon>Pseudomonadota</taxon>
        <taxon>Gammaproteobacteria</taxon>
        <taxon>Enterobacterales</taxon>
        <taxon>Enterobacteriaceae</taxon>
        <taxon>Escherichia</taxon>
    </lineage>
</organism>
<keyword id="KW-0002">3D-structure</keyword>
<keyword id="KW-0479">Metal-binding</keyword>
<keyword id="KW-1185">Reference proteome</keyword>
<keyword id="KW-0862">Zinc</keyword>
<comment type="function">
    <text evidence="1 3">Inhibits all the catalytic activities of DNA gyrase by preventing its interaction with DNA. Acts by binding directly to the C-terminal domain of GyrB, which probably disrupts DNA binding by the gyrase.</text>
</comment>
<comment type="cofactor">
    <cofactor>
        <name>Zn(2+)</name>
        <dbReference type="ChEBI" id="CHEBI:29105"/>
    </cofactor>
    <text>Binds 1 zinc ion.</text>
</comment>
<comment type="subunit">
    <text evidence="1 3">Interacts with GyrB.</text>
</comment>
<comment type="similarity">
    <text evidence="1">Belongs to the DNA gyrase inhibitor YacG family.</text>
</comment>
<evidence type="ECO:0000255" key="1">
    <source>
        <dbReference type="HAMAP-Rule" id="MF_00649"/>
    </source>
</evidence>
<evidence type="ECO:0000256" key="2">
    <source>
        <dbReference type="SAM" id="MobiDB-lite"/>
    </source>
</evidence>
<evidence type="ECO:0000269" key="3">
    <source>
    </source>
</evidence>
<evidence type="ECO:0007829" key="4">
    <source>
        <dbReference type="PDB" id="1LV3"/>
    </source>
</evidence>
<evidence type="ECO:0007829" key="5">
    <source>
        <dbReference type="PDB" id="4TMA"/>
    </source>
</evidence>
<accession>P0A8H8</accession>
<accession>P36681</accession>
<accession>P75644</accession>
<accession>Q8KJQ7</accession>
<feature type="chain" id="PRO_0000211695" description="DNA gyrase inhibitor YacG">
    <location>
        <begin position="1"/>
        <end position="65"/>
    </location>
</feature>
<feature type="region of interest" description="Disordered" evidence="2">
    <location>
        <begin position="45"/>
        <end position="65"/>
    </location>
</feature>
<feature type="compositionally biased region" description="Acidic residues" evidence="2">
    <location>
        <begin position="54"/>
        <end position="65"/>
    </location>
</feature>
<feature type="binding site">
    <location>
        <position position="9"/>
    </location>
    <ligand>
        <name>Zn(2+)</name>
        <dbReference type="ChEBI" id="CHEBI:29105"/>
    </ligand>
</feature>
<feature type="binding site">
    <location>
        <position position="12"/>
    </location>
    <ligand>
        <name>Zn(2+)</name>
        <dbReference type="ChEBI" id="CHEBI:29105"/>
    </ligand>
</feature>
<feature type="binding site">
    <location>
        <position position="28"/>
    </location>
    <ligand>
        <name>Zn(2+)</name>
        <dbReference type="ChEBI" id="CHEBI:29105"/>
    </ligand>
</feature>
<feature type="binding site">
    <location>
        <position position="32"/>
    </location>
    <ligand>
        <name>Zn(2+)</name>
        <dbReference type="ChEBI" id="CHEBI:29105"/>
    </ligand>
</feature>
<feature type="strand" evidence="5">
    <location>
        <begin position="6"/>
        <end position="8"/>
    </location>
</feature>
<feature type="turn" evidence="5">
    <location>
        <begin position="10"/>
        <end position="12"/>
    </location>
</feature>
<feature type="strand" evidence="5">
    <location>
        <begin position="15"/>
        <end position="19"/>
    </location>
</feature>
<feature type="turn" evidence="5">
    <location>
        <begin position="23"/>
        <end position="26"/>
    </location>
</feature>
<feature type="strand" evidence="5">
    <location>
        <begin position="27"/>
        <end position="29"/>
    </location>
</feature>
<feature type="helix" evidence="5">
    <location>
        <begin position="30"/>
        <end position="41"/>
    </location>
</feature>
<feature type="strand" evidence="4">
    <location>
        <begin position="42"/>
        <end position="46"/>
    </location>
</feature>
<feature type="turn" evidence="4">
    <location>
        <begin position="52"/>
        <end position="54"/>
    </location>
</feature>
<feature type="turn" evidence="4">
    <location>
        <begin position="62"/>
        <end position="64"/>
    </location>
</feature>
<sequence>MSETITVNCPTCGKTVVWGEISPFRPFCSKRCQLIDLGEWAAEEKRIPSSGDLSESDDWSEEPKQ</sequence>
<proteinExistence type="evidence at protein level"/>
<dbReference type="EMBL" id="U00096">
    <property type="protein sequence ID" value="AAC73212.1"/>
    <property type="molecule type" value="Genomic_DNA"/>
</dbReference>
<dbReference type="EMBL" id="AP009048">
    <property type="protein sequence ID" value="BAB96668.2"/>
    <property type="molecule type" value="Genomic_DNA"/>
</dbReference>
<dbReference type="EMBL" id="X04831">
    <property type="status" value="NOT_ANNOTATED_CDS"/>
    <property type="molecule type" value="Genomic_DNA"/>
</dbReference>
<dbReference type="PIR" id="E64732">
    <property type="entry name" value="E64732"/>
</dbReference>
<dbReference type="RefSeq" id="NP_414643.1">
    <property type="nucleotide sequence ID" value="NC_000913.3"/>
</dbReference>
<dbReference type="RefSeq" id="WP_000005042.1">
    <property type="nucleotide sequence ID" value="NZ_STEB01000010.1"/>
</dbReference>
<dbReference type="PDB" id="1LV3">
    <property type="method" value="NMR"/>
    <property type="chains" value="A=1-65"/>
</dbReference>
<dbReference type="PDB" id="4TMA">
    <property type="method" value="X-ray"/>
    <property type="resolution" value="3.30 A"/>
    <property type="chains" value="I/J/K/L=1-65"/>
</dbReference>
<dbReference type="PDBsum" id="1LV3"/>
<dbReference type="PDBsum" id="4TMA"/>
<dbReference type="SMR" id="P0A8H8"/>
<dbReference type="BioGRID" id="4261884">
    <property type="interactions" value="2"/>
</dbReference>
<dbReference type="DIP" id="DIP-48126N"/>
<dbReference type="FunCoup" id="P0A8H8">
    <property type="interactions" value="110"/>
</dbReference>
<dbReference type="IntAct" id="P0A8H8">
    <property type="interactions" value="3"/>
</dbReference>
<dbReference type="STRING" id="511145.b0101"/>
<dbReference type="jPOST" id="P0A8H8"/>
<dbReference type="PaxDb" id="511145-b0101"/>
<dbReference type="DNASU" id="945630"/>
<dbReference type="EnsemblBacteria" id="AAC73212">
    <property type="protein sequence ID" value="AAC73212"/>
    <property type="gene ID" value="b0101"/>
</dbReference>
<dbReference type="GeneID" id="93777334"/>
<dbReference type="GeneID" id="945630"/>
<dbReference type="KEGG" id="ecj:JW5008"/>
<dbReference type="KEGG" id="eco:b0101"/>
<dbReference type="KEGG" id="ecoc:C3026_00410"/>
<dbReference type="PATRIC" id="fig|1411691.4.peg.2180"/>
<dbReference type="EchoBASE" id="EB2220"/>
<dbReference type="eggNOG" id="COG3024">
    <property type="taxonomic scope" value="Bacteria"/>
</dbReference>
<dbReference type="HOGENOM" id="CLU_178280_3_1_6"/>
<dbReference type="InParanoid" id="P0A8H8"/>
<dbReference type="OMA" id="WAAEEHK"/>
<dbReference type="OrthoDB" id="9809663at2"/>
<dbReference type="PhylomeDB" id="P0A8H8"/>
<dbReference type="BioCyc" id="EcoCyc:EG12314-MONOMER"/>
<dbReference type="EvolutionaryTrace" id="P0A8H8"/>
<dbReference type="PRO" id="PR:P0A8H8"/>
<dbReference type="Proteomes" id="UP000000625">
    <property type="component" value="Chromosome"/>
</dbReference>
<dbReference type="GO" id="GO:0008657">
    <property type="term" value="F:DNA topoisomerase type II (double strand cut, ATP-hydrolyzing) inhibitor activity"/>
    <property type="evidence" value="ECO:0000314"/>
    <property type="project" value="EcoCyc"/>
</dbReference>
<dbReference type="GO" id="GO:0008270">
    <property type="term" value="F:zinc ion binding"/>
    <property type="evidence" value="ECO:0000314"/>
    <property type="project" value="EcoCyc"/>
</dbReference>
<dbReference type="GO" id="GO:0006355">
    <property type="term" value="P:regulation of DNA-templated transcription"/>
    <property type="evidence" value="ECO:0007669"/>
    <property type="project" value="InterPro"/>
</dbReference>
<dbReference type="FunFam" id="3.30.50.10:FF:000026">
    <property type="entry name" value="DNA gyrase inhibitor YacG"/>
    <property type="match status" value="1"/>
</dbReference>
<dbReference type="Gene3D" id="3.30.50.10">
    <property type="entry name" value="Erythroid Transcription Factor GATA-1, subunit A"/>
    <property type="match status" value="1"/>
</dbReference>
<dbReference type="HAMAP" id="MF_00649">
    <property type="entry name" value="DNA_gyrase_inhibitor_YacG"/>
    <property type="match status" value="1"/>
</dbReference>
<dbReference type="InterPro" id="IPR005584">
    <property type="entry name" value="DNA_gyrase_inhibitor_YacG"/>
</dbReference>
<dbReference type="InterPro" id="IPR013088">
    <property type="entry name" value="Znf_NHR/GATA"/>
</dbReference>
<dbReference type="NCBIfam" id="NF001638">
    <property type="entry name" value="PRK00418.1"/>
    <property type="match status" value="1"/>
</dbReference>
<dbReference type="PANTHER" id="PTHR36150">
    <property type="entry name" value="DNA GYRASE INHIBITOR YACG"/>
    <property type="match status" value="1"/>
</dbReference>
<dbReference type="PANTHER" id="PTHR36150:SF1">
    <property type="entry name" value="DNA GYRASE INHIBITOR YACG"/>
    <property type="match status" value="1"/>
</dbReference>
<dbReference type="Pfam" id="PF03884">
    <property type="entry name" value="YacG"/>
    <property type="match status" value="1"/>
</dbReference>
<dbReference type="SUPFAM" id="SSF57716">
    <property type="entry name" value="Glucocorticoid receptor-like (DNA-binding domain)"/>
    <property type="match status" value="1"/>
</dbReference>
<protein>
    <recommendedName>
        <fullName evidence="1">DNA gyrase inhibitor YacG</fullName>
    </recommendedName>
</protein>
<gene>
    <name evidence="1" type="primary">yacG</name>
    <name type="ordered locus">b0101</name>
    <name type="ordered locus">JW5008</name>
</gene>
<reference key="1">
    <citation type="journal article" date="1994" name="Nucleic Acids Res.">
        <title>Systematic sequencing of the Escherichia coli genome: analysis of the 2.4-4.1 min (110,917-193,643 bp) region.</title>
        <authorList>
            <person name="Fujita N."/>
            <person name="Mori H."/>
            <person name="Yura T."/>
            <person name="Ishihama A."/>
        </authorList>
    </citation>
    <scope>NUCLEOTIDE SEQUENCE [LARGE SCALE GENOMIC DNA]</scope>
    <source>
        <strain>K12 / W3110 / ATCC 27325 / DSM 5911</strain>
    </source>
</reference>
<reference key="2">
    <citation type="journal article" date="1997" name="Science">
        <title>The complete genome sequence of Escherichia coli K-12.</title>
        <authorList>
            <person name="Blattner F.R."/>
            <person name="Plunkett G. III"/>
            <person name="Bloch C.A."/>
            <person name="Perna N.T."/>
            <person name="Burland V."/>
            <person name="Riley M."/>
            <person name="Collado-Vides J."/>
            <person name="Glasner J.D."/>
            <person name="Rode C.K."/>
            <person name="Mayhew G.F."/>
            <person name="Gregor J."/>
            <person name="Davis N.W."/>
            <person name="Kirkpatrick H.A."/>
            <person name="Goeden M.A."/>
            <person name="Rose D.J."/>
            <person name="Mau B."/>
            <person name="Shao Y."/>
        </authorList>
    </citation>
    <scope>NUCLEOTIDE SEQUENCE [LARGE SCALE GENOMIC DNA]</scope>
    <source>
        <strain>K12 / MG1655 / ATCC 47076</strain>
    </source>
</reference>
<reference key="3">
    <citation type="journal article" date="2006" name="Mol. Syst. Biol.">
        <title>Highly accurate genome sequences of Escherichia coli K-12 strains MG1655 and W3110.</title>
        <authorList>
            <person name="Hayashi K."/>
            <person name="Morooka N."/>
            <person name="Yamamoto Y."/>
            <person name="Fujita K."/>
            <person name="Isono K."/>
            <person name="Choi S."/>
            <person name="Ohtsubo E."/>
            <person name="Baba T."/>
            <person name="Wanner B.L."/>
            <person name="Mori H."/>
            <person name="Horiuchi T."/>
        </authorList>
    </citation>
    <scope>NUCLEOTIDE SEQUENCE [LARGE SCALE GENOMIC DNA]</scope>
    <scope>SEQUENCE REVISION</scope>
    <source>
        <strain>K12 / W3110 / ATCC 27325 / DSM 5911</strain>
    </source>
</reference>
<reference key="4">
    <citation type="journal article" date="1987" name="Mol. Gen. Genet.">
        <title>Molecular cloning and nucleotide sequence of the mutT mutator of Escherichia coli that causes A:T to C:G transversion.</title>
        <authorList>
            <person name="Akiyama M."/>
            <person name="Horiuchi T."/>
            <person name="Sekiguchi M."/>
        </authorList>
    </citation>
    <scope>NUCLEOTIDE SEQUENCE [GENOMIC DNA] OF 34-65</scope>
    <source>
        <strain>K12</strain>
    </source>
</reference>
<reference key="5">
    <citation type="journal article" date="1992" name="Nucleic Acids Res.">
        <title>Systematic sequencing of the Escherichia coli genome: analysis of the 0-2.4 min region.</title>
        <authorList>
            <person name="Yura T."/>
            <person name="Mori H."/>
            <person name="Nagai H."/>
            <person name="Nagata T."/>
            <person name="Ishihama A."/>
            <person name="Fujita N."/>
            <person name="Isono K."/>
            <person name="Mizobuchi K."/>
            <person name="Nakata A."/>
        </authorList>
    </citation>
    <scope>NUCLEOTIDE SEQUENCE [LARGE SCALE GENOMIC DNA] OF 34-65</scope>
    <source>
        <strain>K12</strain>
    </source>
</reference>
<reference key="6">
    <citation type="journal article" date="2008" name="Nucleic Acids Res.">
        <title>YacG from Escherichia coli is a specific endogenous inhibitor of DNA gyrase.</title>
        <authorList>
            <person name="Sengupta S."/>
            <person name="Nagaraja V."/>
        </authorList>
    </citation>
    <scope>FUNCTION</scope>
    <scope>INTERACTION WITH GYRB</scope>
</reference>
<reference key="7">
    <citation type="journal article" date="2002" name="Proteins">
        <title>NMR structure of the Escherichia coli protein YacG: a novel sequence motif in the zinc-finger family of proteins.</title>
        <authorList>
            <person name="Ramelot T.A."/>
            <person name="Cort J.R."/>
            <person name="Yee A.A."/>
            <person name="Semesi A."/>
            <person name="Edwards A.M."/>
            <person name="Arrowsmith C.H."/>
            <person name="Kennedy M.A."/>
        </authorList>
    </citation>
    <scope>STRUCTURE BY NMR</scope>
    <source>
        <strain>K12</strain>
    </source>
</reference>